<name>SRCA_RABIT</name>
<reference key="1">
    <citation type="journal article" date="1989" name="Proc. Natl. Acad. Sci. U.S.A.">
        <title>Molecular cloning and expression of cDNA encoding a lumenal calcium binding glycoprotein from sarcoplasmic reticulum.</title>
        <authorList>
            <person name="Leberer E."/>
            <person name="Charuk J.H.M."/>
            <person name="Green N.M."/>
            <person name="Maclennan D.H."/>
        </authorList>
    </citation>
    <scope>NUCLEOTIDE SEQUENCE [MRNA] (ISOFORM 2)</scope>
    <scope>SUBCELLULAR LOCATION</scope>
    <scope>TISSUE SPECIFICITY</scope>
    <scope>GLYCOSYLATION</scope>
</reference>
<reference key="2">
    <citation type="journal article" date="1989" name="J. Biol. Chem.">
        <title>Molecular cloning and expression of cDNA encoding the 53,000-dalton glycoprotein of rabbit skeletal muscle sarcoplasmic reticulum.</title>
        <authorList>
            <person name="Leberer E."/>
            <person name="Charuk J.H.M."/>
            <person name="Clarke D.M."/>
            <person name="Green N.M."/>
            <person name="Zubrycka-Gaarn E."/>
            <person name="McLennan D.H."/>
        </authorList>
    </citation>
    <scope>NUCLEOTIDE SEQUENCE [MRNA] (ISOFORM 1)</scope>
    <scope>SUBCELLULAR LOCATION</scope>
    <scope>TISSUE SPECIFICITY</scope>
    <scope>GLYCOSYLATION</scope>
</reference>
<reference evidence="8" key="3">
    <citation type="journal article" date="2011" name="Nature">
        <title>A high-resolution map of human evolutionary constraint using 29 mammals.</title>
        <authorList>
            <person name="Lindblad-Toh K."/>
            <person name="Garber M."/>
            <person name="Zuk O."/>
            <person name="Lin M.F."/>
            <person name="Parker B.J."/>
            <person name="Washietl S."/>
            <person name="Kheradpour P."/>
            <person name="Ernst J."/>
            <person name="Jordan G."/>
            <person name="Mauceli E."/>
            <person name="Ward L.D."/>
            <person name="Lowe C.B."/>
            <person name="Holloway A.K."/>
            <person name="Clamp M."/>
            <person name="Gnerre S."/>
            <person name="Alfoldi J."/>
            <person name="Beal K."/>
            <person name="Chang J."/>
            <person name="Clawson H."/>
            <person name="Cuff J."/>
            <person name="Di Palma F."/>
            <person name="Fitzgerald S."/>
            <person name="Flicek P."/>
            <person name="Guttman M."/>
            <person name="Hubisz M.J."/>
            <person name="Jaffe D.B."/>
            <person name="Jungreis I."/>
            <person name="Kent W.J."/>
            <person name="Kostka D."/>
            <person name="Lara M."/>
            <person name="Martins A.L."/>
            <person name="Massingham T."/>
            <person name="Moltke I."/>
            <person name="Raney B.J."/>
            <person name="Rasmussen M.D."/>
            <person name="Robinson J."/>
            <person name="Stark A."/>
            <person name="Vilella A.J."/>
            <person name="Wen J."/>
            <person name="Xie X."/>
            <person name="Zody M.C."/>
            <person name="Baldwin J."/>
            <person name="Bloom T."/>
            <person name="Chin C.W."/>
            <person name="Heiman D."/>
            <person name="Nicol R."/>
            <person name="Nusbaum C."/>
            <person name="Young S."/>
            <person name="Wilkinson J."/>
            <person name="Worley K.C."/>
            <person name="Kovar C.L."/>
            <person name="Muzny D.M."/>
            <person name="Gibbs R.A."/>
            <person name="Cree A."/>
            <person name="Dihn H.H."/>
            <person name="Fowler G."/>
            <person name="Jhangiani S."/>
            <person name="Joshi V."/>
            <person name="Lee S."/>
            <person name="Lewis L.R."/>
            <person name="Nazareth L.V."/>
            <person name="Okwuonu G."/>
            <person name="Santibanez J."/>
            <person name="Warren W.C."/>
            <person name="Mardis E.R."/>
            <person name="Weinstock G.M."/>
            <person name="Wilson R.K."/>
            <person name="Delehaunty K."/>
            <person name="Dooling D."/>
            <person name="Fronik C."/>
            <person name="Fulton L."/>
            <person name="Fulton B."/>
            <person name="Graves T."/>
            <person name="Minx P."/>
            <person name="Sodergren E."/>
            <person name="Birney E."/>
            <person name="Margulies E.H."/>
            <person name="Herrero J."/>
            <person name="Green E.D."/>
            <person name="Haussler D."/>
            <person name="Siepel A."/>
            <person name="Goldman N."/>
            <person name="Pollard K.S."/>
            <person name="Pedersen J.S."/>
            <person name="Lander E.S."/>
            <person name="Kellis M."/>
        </authorList>
    </citation>
    <scope>NUCLEOTIDE SEQUENCE [LARGE SCALE GENOMIC DNA]</scope>
    <source>
        <strain evidence="8">Thorbecke</strain>
    </source>
</reference>
<protein>
    <recommendedName>
        <fullName evidence="6">Sarcalumenin</fullName>
    </recommendedName>
</protein>
<proteinExistence type="evidence at protein level"/>
<feature type="signal peptide" evidence="1">
    <location>
        <begin position="1"/>
        <end position="19"/>
    </location>
</feature>
<feature type="chain" id="PRO_0000022413" description="Sarcalumenin">
    <location>
        <begin position="20"/>
        <end position="472"/>
    </location>
</feature>
<feature type="domain" description="Dynamin-type G" evidence="2">
    <location>
        <begin position="89"/>
        <end position="330"/>
    </location>
</feature>
<feature type="region of interest" description="G1 motif" evidence="2">
    <location>
        <begin position="99"/>
        <end position="106"/>
    </location>
</feature>
<feature type="region of interest" description="G2 motif" evidence="2">
    <location>
        <begin position="127"/>
        <end position="128"/>
    </location>
</feature>
<feature type="region of interest" description="G3 motif" evidence="2">
    <location>
        <begin position="189"/>
        <end position="192"/>
    </location>
</feature>
<feature type="region of interest" description="G4 motif" evidence="2">
    <location>
        <begin position="254"/>
        <end position="257"/>
    </location>
</feature>
<feature type="region of interest" description="G5 motif" evidence="2">
    <location>
        <position position="277"/>
    </location>
</feature>
<feature type="glycosylation site" description="N-linked (GlcNAc...) asparagine" evidence="1">
    <location>
        <position position="280"/>
    </location>
</feature>
<feature type="glycosylation site" description="N-linked (GlcNAc...) asparagine" evidence="1">
    <location>
        <position position="388"/>
    </location>
</feature>
<feature type="splice variant" id="VSP_060765" description="In isoform 2." evidence="7">
    <original>E</original>
    <variation>ELQVPASGGTEDVGNLLENHFSAGDASLEEKERALYADAAPRDENLLLHYPDGREAESAERTTAGAPPAAPGPGSEPEASLPNASATESAPPGDATGPREEQGPAAASALPPGGDEGSLQEERQELSSGEGPGEEAAGLGLPSEGAASGETQGQAGGGKVPKEAEGVLGDSPVQGAAAETAEPEASGIAPSSEDEQIHTLEGEGKGSPGPDHGPTELDGTPDGASAGEEPKADLDTEARERAEDQHQVHTLETEGKGGPGPHQGPAEVDGGPDTVSVGESLEAREGAEDQGKPSPGQEAGPAAAEAGTEPGGTKHSEEEGMEQDRPPEGQVPVMRQDEGGEASSEEEGDEEGGSEEEEGDPSEEDSGEDSGDGASSEEAGAASEEASGTAGLGEEETQPSTEGLDSGPAGSQAQDTEAEEPEEGHQGPESPITAPQE</variation>
    <location>
        <position position="20"/>
    </location>
</feature>
<feature type="sequence conflict" description="In Ref. 1; AAA31189." evidence="7" ref="1">
    <original>E</original>
    <variation>Q</variation>
    <location>
        <position position="38"/>
    </location>
</feature>
<feature type="glycosylation site" description="N-linked (GlcNAc...) asparagine" evidence="1">
    <location sequence="P13666-1">
        <position position="102"/>
    </location>
</feature>
<feature type="sequence conflict" description="In Ref. 1; AAA31189." evidence="7" ref="1">
    <original>T</original>
    <variation>S</variation>
    <location sequence="P13666-1">
        <position position="170"/>
    </location>
</feature>
<feature type="sequence conflict" description="In Ref. 1; AAA31189." evidence="7" ref="1">
    <original>G</original>
    <variation>M</variation>
    <location sequence="P13666-1">
        <position position="315"/>
    </location>
</feature>
<comment type="subcellular location">
    <subcellularLocation>
        <location evidence="3 4">Sarcoplasmic reticulum lumen</location>
    </subcellularLocation>
    <subcellularLocation>
        <location evidence="3 4">Sarcoplasmic reticulum membrane</location>
        <topology evidence="3 4">Peripheral membrane protein</topology>
    </subcellularLocation>
    <text evidence="3 4">May associate with the sarcoplasmic reticulum membrane, via a calcium-dependent mechanism.</text>
</comment>
<comment type="alternative products">
    <event type="alternative splicing"/>
    <isoform>
        <id>P13666-2</id>
        <name>1</name>
        <name evidence="5">53 kDa</name>
        <sequence type="displayed"/>
    </isoform>
    <isoform>
        <id>P13666-1</id>
        <name>2</name>
        <name evidence="6">160 kDa</name>
        <sequence type="described" ref="VSP_060765"/>
    </isoform>
</comment>
<comment type="tissue specificity">
    <text evidence="3 4">Detected in skeletal muscle.</text>
</comment>
<comment type="PTM">
    <text evidence="3 4">N-glycosylated.</text>
</comment>
<comment type="similarity">
    <text evidence="2">Belongs to the TRAFAC class dynamin-like GTPase superfamily. Dynamin/Fzo/YdjA family.</text>
</comment>
<organism>
    <name type="scientific">Oryctolagus cuniculus</name>
    <name type="common">Rabbit</name>
    <dbReference type="NCBI Taxonomy" id="9986"/>
    <lineage>
        <taxon>Eukaryota</taxon>
        <taxon>Metazoa</taxon>
        <taxon>Chordata</taxon>
        <taxon>Craniata</taxon>
        <taxon>Vertebrata</taxon>
        <taxon>Euteleostomi</taxon>
        <taxon>Mammalia</taxon>
        <taxon>Eutheria</taxon>
        <taxon>Euarchontoglires</taxon>
        <taxon>Glires</taxon>
        <taxon>Lagomorpha</taxon>
        <taxon>Leporidae</taxon>
        <taxon>Oryctolagus</taxon>
    </lineage>
</organism>
<evidence type="ECO:0000255" key="1"/>
<evidence type="ECO:0000255" key="2">
    <source>
        <dbReference type="PROSITE-ProRule" id="PRU01055"/>
    </source>
</evidence>
<evidence type="ECO:0000269" key="3">
    <source>
    </source>
</evidence>
<evidence type="ECO:0000269" key="4">
    <source>
    </source>
</evidence>
<evidence type="ECO:0000303" key="5">
    <source>
    </source>
</evidence>
<evidence type="ECO:0000303" key="6">
    <source>
    </source>
</evidence>
<evidence type="ECO:0000305" key="7"/>
<evidence type="ECO:0000312" key="8">
    <source>
        <dbReference type="Proteomes" id="UP000001811"/>
    </source>
</evidence>
<dbReference type="EMBL" id="M25750">
    <property type="protein sequence ID" value="AAA31189.1"/>
    <property type="molecule type" value="mRNA"/>
</dbReference>
<dbReference type="EMBL" id="J04480">
    <property type="protein sequence ID" value="AAA60730.1"/>
    <property type="molecule type" value="mRNA"/>
</dbReference>
<dbReference type="PIR" id="A33280">
    <property type="entry name" value="A33280"/>
</dbReference>
<dbReference type="PIR" id="A33312">
    <property type="entry name" value="A33312"/>
</dbReference>
<dbReference type="RefSeq" id="NP_001075750.1">
    <property type="nucleotide sequence ID" value="NM_001082281.1"/>
</dbReference>
<dbReference type="RefSeq" id="XP_008247813.1">
    <molecule id="P13666-2"/>
    <property type="nucleotide sequence ID" value="XM_008249591.4"/>
</dbReference>
<dbReference type="SMR" id="P13666"/>
<dbReference type="FunCoup" id="P13666">
    <property type="interactions" value="25"/>
</dbReference>
<dbReference type="STRING" id="9986.ENSOCUP00000015642"/>
<dbReference type="GlyCosmos" id="P13666">
    <property type="glycosylation" value="3 sites, No reported glycans"/>
</dbReference>
<dbReference type="PaxDb" id="9986-ENSOCUP00000015642"/>
<dbReference type="Ensembl" id="ENSOCUT00000028857.3">
    <molecule id="P13666-1"/>
    <property type="protein sequence ID" value="ENSOCUP00000015642.1"/>
    <property type="gene ID" value="ENSOCUG00000025140.3"/>
</dbReference>
<dbReference type="Ensembl" id="ENSOCUT00000055593.1">
    <molecule id="P13666-2"/>
    <property type="protein sequence ID" value="ENSOCUP00000031954.1"/>
    <property type="gene ID" value="ENSOCUG00000025140.3"/>
</dbReference>
<dbReference type="GeneID" id="100009112"/>
<dbReference type="KEGG" id="ocu:100009112"/>
<dbReference type="CTD" id="6345"/>
<dbReference type="eggNOG" id="KOG1954">
    <property type="taxonomic scope" value="Eukaryota"/>
</dbReference>
<dbReference type="GeneTree" id="ENSGT00940000157834"/>
<dbReference type="HOGENOM" id="CLU_017595_4_0_1"/>
<dbReference type="InParanoid" id="P13666"/>
<dbReference type="OMA" id="XGEITSK"/>
<dbReference type="OrthoDB" id="422720at2759"/>
<dbReference type="TreeFam" id="TF324008"/>
<dbReference type="Proteomes" id="UP000001811">
    <property type="component" value="Unplaced"/>
</dbReference>
<dbReference type="Bgee" id="ENSOCUG00000025140">
    <property type="expression patterns" value="Expressed in skeletal muscle tissue and 15 other cell types or tissues"/>
</dbReference>
<dbReference type="GO" id="GO:0016529">
    <property type="term" value="C:sarcoplasmic reticulum"/>
    <property type="evidence" value="ECO:0000314"/>
    <property type="project" value="FlyBase"/>
</dbReference>
<dbReference type="GO" id="GO:0033018">
    <property type="term" value="C:sarcoplasmic reticulum lumen"/>
    <property type="evidence" value="ECO:0007669"/>
    <property type="project" value="UniProtKB-SubCell"/>
</dbReference>
<dbReference type="GO" id="GO:0033017">
    <property type="term" value="C:sarcoplasmic reticulum membrane"/>
    <property type="evidence" value="ECO:0007669"/>
    <property type="project" value="UniProtKB-SubCell"/>
</dbReference>
<dbReference type="GO" id="GO:0005509">
    <property type="term" value="F:calcium ion binding"/>
    <property type="evidence" value="ECO:0000314"/>
    <property type="project" value="FlyBase"/>
</dbReference>
<dbReference type="GO" id="GO:0005525">
    <property type="term" value="F:GTP binding"/>
    <property type="evidence" value="ECO:0007669"/>
    <property type="project" value="InterPro"/>
</dbReference>
<dbReference type="GO" id="GO:0014873">
    <property type="term" value="P:response to muscle activity involved in regulation of muscle adaptation"/>
    <property type="evidence" value="ECO:0007669"/>
    <property type="project" value="Ensembl"/>
</dbReference>
<dbReference type="GO" id="GO:0002115">
    <property type="term" value="P:store-operated calcium entry"/>
    <property type="evidence" value="ECO:0007669"/>
    <property type="project" value="Ensembl"/>
</dbReference>
<dbReference type="CDD" id="cd09913">
    <property type="entry name" value="EHD"/>
    <property type="match status" value="1"/>
</dbReference>
<dbReference type="FunFam" id="3.40.50.300:FF:000635">
    <property type="entry name" value="Sarcalumenin, putative"/>
    <property type="match status" value="1"/>
</dbReference>
<dbReference type="Gene3D" id="1.10.268.20">
    <property type="match status" value="1"/>
</dbReference>
<dbReference type="Gene3D" id="3.40.50.300">
    <property type="entry name" value="P-loop containing nucleotide triphosphate hydrolases"/>
    <property type="match status" value="1"/>
</dbReference>
<dbReference type="InterPro" id="IPR045063">
    <property type="entry name" value="Dynamin_N"/>
</dbReference>
<dbReference type="InterPro" id="IPR031692">
    <property type="entry name" value="EHD_N"/>
</dbReference>
<dbReference type="InterPro" id="IPR030381">
    <property type="entry name" value="G_DYNAMIN_dom"/>
</dbReference>
<dbReference type="InterPro" id="IPR027417">
    <property type="entry name" value="P-loop_NTPase"/>
</dbReference>
<dbReference type="InterPro" id="IPR051943">
    <property type="entry name" value="TRAFAC_Dynamin-like_GTPase"/>
</dbReference>
<dbReference type="PANTHER" id="PTHR43681:SF1">
    <property type="entry name" value="SARCALUMENIN"/>
    <property type="match status" value="1"/>
</dbReference>
<dbReference type="PANTHER" id="PTHR43681">
    <property type="entry name" value="TRANSMEMBRANE GTPASE FZO"/>
    <property type="match status" value="1"/>
</dbReference>
<dbReference type="Pfam" id="PF00350">
    <property type="entry name" value="Dynamin_N"/>
    <property type="match status" value="1"/>
</dbReference>
<dbReference type="Pfam" id="PF16880">
    <property type="entry name" value="EHD_N"/>
    <property type="match status" value="1"/>
</dbReference>
<dbReference type="SUPFAM" id="SSF52540">
    <property type="entry name" value="P-loop containing nucleoside triphosphate hydrolases"/>
    <property type="match status" value="1"/>
</dbReference>
<dbReference type="PROSITE" id="PS51718">
    <property type="entry name" value="G_DYNAMIN_2"/>
    <property type="match status" value="1"/>
</dbReference>
<sequence>MRALLLFCFVASLLLSGQAEETEDVSEEVPMRDRSHIEKTLMLNEDKPTDDFSAVLQRLRKIYHSSIKPLEQSYKYNELRQHEITDGEITSKPMVLFLGPWSVGKSTMINYLLGLENTRYQLYTGAEPTTSEFTVLMHGPKLKTIEGIVMAADSARSFSPLEKFGQNFLEKLIGIEVPHKLLERVTFVDTPGIIENRKQQERGYPFNDVCQWFIDRADLIFVVFDPTKLDVGLELETLFRQLKGRESQIRIILNKADNLATQMLMRVYGALFWSLAPLINVTEPPRVYVSSFWPQEYKPDTHRELFLREEISLLEDLNQVIENRLENKIAFIRQHAIRVRIHALLVDRYLQTYKDKMTFFSDGELVFKDIVEDPDKFYIFKTILAKTNVSKFDLPNREAYKDFFGINPISSFKLLSQQCSYMGGCFLEKIERAITQELPSLLGSLGLGKNPGALNCDKTGCGETPKNRYKKH</sequence>
<gene>
    <name type="primary">SRL</name>
</gene>
<keyword id="KW-0025">Alternative splicing</keyword>
<keyword id="KW-0325">Glycoprotein</keyword>
<keyword id="KW-0472">Membrane</keyword>
<keyword id="KW-1185">Reference proteome</keyword>
<keyword id="KW-0703">Sarcoplasmic reticulum</keyword>
<keyword id="KW-0732">Signal</keyword>
<accession>P13666</accession>
<accession>G1TFF2</accession>